<accession>O06000</accession>
<name>RS1H_BACC1</name>
<sequence>MVEKMNEEVMDSKELQVGDVVTGSVTKVEEKQVLVNVGYKTDGVIPISELANVHIEKASDVVELDQILELKIIKLEENDLVLSKRAVDAEKAWIELQEKFTSGHVFDVTVKDIVNGGLVVDLGVRGFIPASLVEVHYVEDFTDYKGKTLAVKIVELDREKNRVILSHKAVVELELDSKKKEAISSLKEGDVVEGTVQRLTDFGAFVNVGGVDGLVHISQISHERVEQPSEVLEQGQKVKVKVLSVDADTQRISLSIKAAQPGPWENIAGEVKAGDIREGIVKRLVTFGAFVEILPGVEGLVHVSQIANRHVKNPNEVLEMGQEVKVKVLEVHVAEKRISLSIKEAFEENNVTEDYSQYEPNADSATFQLSDIIGEQLKKLKK</sequence>
<comment type="similarity">
    <text evidence="5">Belongs to the bacterial ribosomal protein bS1 family.</text>
</comment>
<gene>
    <name evidence="4" type="primary">rpsA</name>
    <name evidence="3" type="synonym">rs1h</name>
    <name type="ordered locus">BCE_1625</name>
</gene>
<organism>
    <name type="scientific">Bacillus cereus (strain ATCC 10987 / NRS 248)</name>
    <dbReference type="NCBI Taxonomy" id="222523"/>
    <lineage>
        <taxon>Bacteria</taxon>
        <taxon>Bacillati</taxon>
        <taxon>Bacillota</taxon>
        <taxon>Bacilli</taxon>
        <taxon>Bacillales</taxon>
        <taxon>Bacillaceae</taxon>
        <taxon>Bacillus</taxon>
        <taxon>Bacillus cereus group</taxon>
    </lineage>
</organism>
<feature type="chain" id="PRO_0000196025" description="Small ribosomal subunit protein bS1 homolog">
    <location>
        <begin position="1"/>
        <end position="382"/>
    </location>
</feature>
<feature type="domain" description="S1 motif 1" evidence="2">
    <location>
        <begin position="18"/>
        <end position="85"/>
    </location>
</feature>
<feature type="domain" description="S1 motif 2" evidence="2">
    <location>
        <begin position="103"/>
        <end position="168"/>
    </location>
</feature>
<feature type="domain" description="S1 motif 3" evidence="2">
    <location>
        <begin position="189"/>
        <end position="257"/>
    </location>
</feature>
<feature type="domain" description="S1 motif 4" evidence="2">
    <location>
        <begin position="274"/>
        <end position="343"/>
    </location>
</feature>
<feature type="modified residue" description="Phosphoserine" evidence="1">
    <location>
        <position position="244"/>
    </location>
</feature>
<reference key="1">
    <citation type="journal article" date="1999" name="Microbiology">
        <title>Genome organization is not conserved between Bacillus cereus and Bacillus subtilis.</title>
        <authorList>
            <person name="Oekstad O.A."/>
            <person name="Hegna I.K."/>
            <person name="Lindbaeck T."/>
            <person name="Rishovd A.-L."/>
            <person name="Kolstoe A.-B."/>
        </authorList>
    </citation>
    <scope>NUCLEOTIDE SEQUENCE [GENOMIC DNA]</scope>
    <source>
        <strain>ATCC 10987 / NRS 248</strain>
    </source>
</reference>
<reference key="2">
    <citation type="journal article" date="2004" name="Nucleic Acids Res.">
        <title>The genome sequence of Bacillus cereus ATCC 10987 reveals metabolic adaptations and a large plasmid related to Bacillus anthracis pXO1.</title>
        <authorList>
            <person name="Rasko D.A."/>
            <person name="Ravel J."/>
            <person name="Oekstad O.A."/>
            <person name="Helgason E."/>
            <person name="Cer R.Z."/>
            <person name="Jiang L."/>
            <person name="Shores K.A."/>
            <person name="Fouts D.E."/>
            <person name="Tourasse N.J."/>
            <person name="Angiuoli S.V."/>
            <person name="Kolonay J.F."/>
            <person name="Nelson W.C."/>
            <person name="Kolstoe A.-B."/>
            <person name="Fraser C.M."/>
            <person name="Read T.D."/>
        </authorList>
    </citation>
    <scope>NUCLEOTIDE SEQUENCE [LARGE SCALE GENOMIC DNA]</scope>
    <source>
        <strain>ATCC 10987 / NRS 248</strain>
    </source>
</reference>
<proteinExistence type="inferred from homology"/>
<protein>
    <recommendedName>
        <fullName evidence="5">Small ribosomal subunit protein bS1 homolog</fullName>
    </recommendedName>
    <alternativeName>
        <fullName evidence="5">30S ribosomal protein S1 homolog</fullName>
    </alternativeName>
</protein>
<evidence type="ECO:0000250" key="1"/>
<evidence type="ECO:0000255" key="2">
    <source>
        <dbReference type="PROSITE-ProRule" id="PRU00180"/>
    </source>
</evidence>
<evidence type="ECO:0000303" key="3">
    <source>
    </source>
</evidence>
<evidence type="ECO:0000303" key="4">
    <source>
    </source>
</evidence>
<evidence type="ECO:0000305" key="5"/>
<keyword id="KW-0597">Phosphoprotein</keyword>
<keyword id="KW-0677">Repeat</keyword>
<keyword id="KW-0687">Ribonucleoprotein</keyword>
<keyword id="KW-0689">Ribosomal protein</keyword>
<keyword id="KW-0694">RNA-binding</keyword>
<dbReference type="EMBL" id="Y09433">
    <property type="protein sequence ID" value="CAA70584.1"/>
    <property type="molecule type" value="Genomic_DNA"/>
</dbReference>
<dbReference type="EMBL" id="AE017194">
    <property type="protein sequence ID" value="AAS40554.1"/>
    <property type="molecule type" value="Genomic_DNA"/>
</dbReference>
<dbReference type="SMR" id="O06000"/>
<dbReference type="KEGG" id="bca:BCE_1625"/>
<dbReference type="HOGENOM" id="CLU_015805_4_5_9"/>
<dbReference type="Proteomes" id="UP000002527">
    <property type="component" value="Chromosome"/>
</dbReference>
<dbReference type="GO" id="GO:0022627">
    <property type="term" value="C:cytosolic small ribosomal subunit"/>
    <property type="evidence" value="ECO:0007669"/>
    <property type="project" value="TreeGrafter"/>
</dbReference>
<dbReference type="GO" id="GO:0003729">
    <property type="term" value="F:mRNA binding"/>
    <property type="evidence" value="ECO:0007669"/>
    <property type="project" value="TreeGrafter"/>
</dbReference>
<dbReference type="GO" id="GO:0003735">
    <property type="term" value="F:structural constituent of ribosome"/>
    <property type="evidence" value="ECO:0007669"/>
    <property type="project" value="TreeGrafter"/>
</dbReference>
<dbReference type="GO" id="GO:0006412">
    <property type="term" value="P:translation"/>
    <property type="evidence" value="ECO:0007669"/>
    <property type="project" value="TreeGrafter"/>
</dbReference>
<dbReference type="CDD" id="cd05687">
    <property type="entry name" value="S1_RPS1_repeat_ec1_hs1"/>
    <property type="match status" value="1"/>
</dbReference>
<dbReference type="CDD" id="cd04465">
    <property type="entry name" value="S1_RPS1_repeat_ec2_hs2"/>
    <property type="match status" value="1"/>
</dbReference>
<dbReference type="CDD" id="cd05688">
    <property type="entry name" value="S1_RPS1_repeat_ec3"/>
    <property type="match status" value="1"/>
</dbReference>
<dbReference type="FunFam" id="2.40.50.140:FF:000114">
    <property type="entry name" value="30S ribosomal protein S1"/>
    <property type="match status" value="2"/>
</dbReference>
<dbReference type="FunFam" id="2.40.50.140:FF:000166">
    <property type="entry name" value="30S ribosomal protein S1"/>
    <property type="match status" value="1"/>
</dbReference>
<dbReference type="FunFam" id="2.40.50.140:FF:000182">
    <property type="entry name" value="30S ribosomal protein S1"/>
    <property type="match status" value="1"/>
</dbReference>
<dbReference type="Gene3D" id="2.40.50.140">
    <property type="entry name" value="Nucleic acid-binding proteins"/>
    <property type="match status" value="4"/>
</dbReference>
<dbReference type="InterPro" id="IPR012340">
    <property type="entry name" value="NA-bd_OB-fold"/>
</dbReference>
<dbReference type="InterPro" id="IPR050437">
    <property type="entry name" value="Ribos_protein_bS1-like"/>
</dbReference>
<dbReference type="InterPro" id="IPR035104">
    <property type="entry name" value="Ribosomal_protein_S1-like"/>
</dbReference>
<dbReference type="InterPro" id="IPR003029">
    <property type="entry name" value="S1_domain"/>
</dbReference>
<dbReference type="NCBIfam" id="NF005208">
    <property type="entry name" value="PRK06676.1"/>
    <property type="match status" value="1"/>
</dbReference>
<dbReference type="PANTHER" id="PTHR10724">
    <property type="entry name" value="30S RIBOSOMAL PROTEIN S1"/>
    <property type="match status" value="1"/>
</dbReference>
<dbReference type="PANTHER" id="PTHR10724:SF7">
    <property type="entry name" value="SMALL RIBOSOMAL SUBUNIT PROTEIN BS1C"/>
    <property type="match status" value="1"/>
</dbReference>
<dbReference type="Pfam" id="PF00575">
    <property type="entry name" value="S1"/>
    <property type="match status" value="4"/>
</dbReference>
<dbReference type="PRINTS" id="PR00681">
    <property type="entry name" value="RIBOSOMALS1"/>
</dbReference>
<dbReference type="SMART" id="SM00316">
    <property type="entry name" value="S1"/>
    <property type="match status" value="4"/>
</dbReference>
<dbReference type="SUPFAM" id="SSF50249">
    <property type="entry name" value="Nucleic acid-binding proteins"/>
    <property type="match status" value="4"/>
</dbReference>
<dbReference type="PROSITE" id="PS50126">
    <property type="entry name" value="S1"/>
    <property type="match status" value="4"/>
</dbReference>